<keyword id="KW-0002">3D-structure</keyword>
<keyword id="KW-1003">Cell membrane</keyword>
<keyword id="KW-0966">Cell projection</keyword>
<keyword id="KW-0225">Disease variant</keyword>
<keyword id="KW-0325">Glycoprotein</keyword>
<keyword id="KW-0991">Intellectual disability</keyword>
<keyword id="KW-0407">Ion channel</keyword>
<keyword id="KW-0406">Ion transport</keyword>
<keyword id="KW-0472">Membrane</keyword>
<keyword id="KW-0479">Metal-binding</keyword>
<keyword id="KW-0496">Mitochondrion</keyword>
<keyword id="KW-0999">Mitochondrion inner membrane</keyword>
<keyword id="KW-0630">Potassium</keyword>
<keyword id="KW-0631">Potassium channel</keyword>
<keyword id="KW-0633">Potassium transport</keyword>
<keyword id="KW-1185">Reference proteome</keyword>
<keyword id="KW-0915">Sodium</keyword>
<keyword id="KW-0894">Sodium channel</keyword>
<keyword id="KW-0739">Sodium transport</keyword>
<keyword id="KW-0812">Transmembrane</keyword>
<keyword id="KW-1133">Transmembrane helix</keyword>
<keyword id="KW-0813">Transport</keyword>
<proteinExistence type="evidence at protein level"/>
<feature type="chain" id="PRO_0000101754" description="Potassium channel subfamily K member 9">
    <location>
        <begin position="1"/>
        <end position="374"/>
    </location>
</feature>
<feature type="topological domain" description="Cytoplasmic" evidence="4">
    <location>
        <begin position="1"/>
        <end position="8"/>
    </location>
</feature>
<feature type="transmembrane region" description="Helical" evidence="4">
    <location>
        <begin position="9"/>
        <end position="29"/>
    </location>
</feature>
<feature type="topological domain" description="Extracellular" evidence="4">
    <location>
        <begin position="30"/>
        <end position="88"/>
    </location>
</feature>
<feature type="intramembrane region" description="Pore-forming; Name=Pore-forming 1" evidence="4">
    <location>
        <begin position="89"/>
        <end position="101"/>
    </location>
</feature>
<feature type="topological domain" description="Extracellular" evidence="4">
    <location>
        <begin position="102"/>
        <end position="107"/>
    </location>
</feature>
<feature type="transmembrane region" description="Helical" evidence="4">
    <location>
        <begin position="108"/>
        <end position="128"/>
    </location>
</feature>
<feature type="topological domain" description="Cytoplasmic" evidence="4">
    <location>
        <begin position="129"/>
        <end position="158"/>
    </location>
</feature>
<feature type="transmembrane region" description="Helical" evidence="4">
    <location>
        <begin position="159"/>
        <end position="179"/>
    </location>
</feature>
<feature type="topological domain" description="Extracellular" evidence="4">
    <location>
        <begin position="180"/>
        <end position="194"/>
    </location>
</feature>
<feature type="intramembrane region" description="Pore-forming; Name=Pore-forming 2" evidence="4">
    <location>
        <begin position="195"/>
        <end position="207"/>
    </location>
</feature>
<feature type="topological domain" description="Extracellular" evidence="4">
    <location>
        <begin position="208"/>
        <end position="218"/>
    </location>
</feature>
<feature type="transmembrane region" description="Helical" evidence="4">
    <location>
        <begin position="219"/>
        <end position="239"/>
    </location>
</feature>
<feature type="topological domain" description="Cytoplasmic" evidence="4">
    <location>
        <begin position="240"/>
        <end position="374"/>
    </location>
</feature>
<feature type="region of interest" description="Selectivity filter 1" evidence="18">
    <location>
        <begin position="93"/>
        <end position="98"/>
    </location>
</feature>
<feature type="region of interest" description="Selectivity filter 2" evidence="18">
    <location>
        <begin position="199"/>
        <end position="204"/>
    </location>
</feature>
<feature type="region of interest" description="X-gate" evidence="14">
    <location>
        <begin position="243"/>
        <end position="248"/>
    </location>
</feature>
<feature type="binding site" evidence="14 20">
    <location>
        <position position="93"/>
    </location>
    <ligand>
        <name>K(+)</name>
        <dbReference type="ChEBI" id="CHEBI:29103"/>
        <label>1</label>
    </ligand>
</feature>
<feature type="binding site" evidence="1">
    <location>
        <position position="93"/>
    </location>
    <ligand>
        <name>K(+)</name>
        <dbReference type="ChEBI" id="CHEBI:29103"/>
        <label>4</label>
    </ligand>
</feature>
<feature type="binding site" evidence="1">
    <location>
        <position position="94"/>
    </location>
    <ligand>
        <name>K(+)</name>
        <dbReference type="ChEBI" id="CHEBI:29103"/>
        <label>1</label>
    </ligand>
</feature>
<feature type="binding site" evidence="1">
    <location>
        <position position="94"/>
    </location>
    <ligand>
        <name>K(+)</name>
        <dbReference type="ChEBI" id="CHEBI:29103"/>
        <label>2</label>
    </ligand>
</feature>
<feature type="binding site" evidence="1">
    <location>
        <position position="95"/>
    </location>
    <ligand>
        <name>K(+)</name>
        <dbReference type="ChEBI" id="CHEBI:29103"/>
        <label>2</label>
    </ligand>
</feature>
<feature type="binding site" evidence="1">
    <location>
        <position position="95"/>
    </location>
    <ligand>
        <name>K(+)</name>
        <dbReference type="ChEBI" id="CHEBI:29103"/>
        <label>3</label>
    </ligand>
</feature>
<feature type="binding site" evidence="1">
    <location>
        <position position="96"/>
    </location>
    <ligand>
        <name>K(+)</name>
        <dbReference type="ChEBI" id="CHEBI:29103"/>
        <label>3</label>
    </ligand>
</feature>
<feature type="binding site" evidence="14 20">
    <location>
        <position position="199"/>
    </location>
    <ligand>
        <name>K(+)</name>
        <dbReference type="ChEBI" id="CHEBI:29103"/>
        <label>1</label>
    </ligand>
</feature>
<feature type="binding site" evidence="1">
    <location>
        <position position="199"/>
    </location>
    <ligand>
        <name>K(+)</name>
        <dbReference type="ChEBI" id="CHEBI:29103"/>
        <label>4</label>
    </ligand>
</feature>
<feature type="binding site" evidence="1">
    <location>
        <position position="200"/>
    </location>
    <ligand>
        <name>K(+)</name>
        <dbReference type="ChEBI" id="CHEBI:29103"/>
        <label>1</label>
    </ligand>
</feature>
<feature type="binding site" evidence="1">
    <location>
        <position position="200"/>
    </location>
    <ligand>
        <name>K(+)</name>
        <dbReference type="ChEBI" id="CHEBI:29103"/>
        <label>2</label>
    </ligand>
</feature>
<feature type="binding site" evidence="1">
    <location>
        <position position="201"/>
    </location>
    <ligand>
        <name>K(+)</name>
        <dbReference type="ChEBI" id="CHEBI:29103"/>
        <label>2</label>
    </ligand>
</feature>
<feature type="binding site" evidence="1">
    <location>
        <position position="201"/>
    </location>
    <ligand>
        <name>K(+)</name>
        <dbReference type="ChEBI" id="CHEBI:29103"/>
        <label>3</label>
    </ligand>
</feature>
<feature type="binding site" evidence="1">
    <location>
        <position position="202"/>
    </location>
    <ligand>
        <name>K(+)</name>
        <dbReference type="ChEBI" id="CHEBI:29103"/>
        <label>3</label>
    </ligand>
</feature>
<feature type="site" description="Forms a cation-pi interaction with protonated H-98, stabilizing the C-type inactivated state" evidence="14">
    <location>
        <position position="78"/>
    </location>
</feature>
<feature type="site" description="pH sensor" evidence="14">
    <location>
        <position position="98"/>
    </location>
</feature>
<feature type="glycosylation site" description="N-linked (GlcNAc...) asparagine" evidence="4">
    <location>
        <position position="53"/>
    </location>
</feature>
<feature type="sequence variant" id="VAR_054373" description="In BIBARS; inactive; dbSNP:rs121908332." evidence="8 12">
    <original>G</original>
    <variation>R</variation>
    <location>
        <position position="236"/>
    </location>
</feature>
<feature type="sequence variant" id="VAR_084510" description="In BIBARS." evidence="13">
    <original>A</original>
    <variation>D</variation>
    <location>
        <position position="237"/>
    </location>
</feature>
<feature type="mutagenesis site" description="Impairs channel inhibition by extracellular acidification." evidence="14">
    <original>W</original>
    <variation>A</variation>
    <variation>L</variation>
    <variation>F</variation>
    <location>
        <position position="78"/>
    </location>
</feature>
<feature type="mutagenesis site" description="Abolishes voltage gating. Conducts currents with linear I-V relationship characteristic of classical leak channels." evidence="11">
    <original>T</original>
    <variation>C</variation>
    <location>
        <position position="93"/>
    </location>
</feature>
<feature type="mutagenesis site" description="Impairs channel inhibition by extracellular acidification. Does not affect channel ion selectivity." evidence="9 14">
    <original>H</original>
    <variation>D</variation>
    <variation>N</variation>
    <location>
        <position position="98"/>
    </location>
</feature>
<feature type="mutagenesis site" description="Abolishes voltage gating. Conducts currents with linear I-V relationship characteristic of classical leak channels." evidence="11">
    <original>T</original>
    <variation>C</variation>
    <location>
        <position position="199"/>
    </location>
</feature>
<feature type="helix" evidence="21">
    <location>
        <begin position="3"/>
        <end position="52"/>
    </location>
</feature>
<feature type="helix" evidence="21">
    <location>
        <begin position="56"/>
        <end position="73"/>
    </location>
</feature>
<feature type="strand" evidence="21">
    <location>
        <begin position="77"/>
        <end position="79"/>
    </location>
</feature>
<feature type="helix" evidence="21">
    <location>
        <begin position="80"/>
        <end position="91"/>
    </location>
</feature>
<feature type="helix" evidence="21">
    <location>
        <begin position="104"/>
        <end position="146"/>
    </location>
</feature>
<feature type="helix" evidence="21">
    <location>
        <begin position="156"/>
        <end position="181"/>
    </location>
</feature>
<feature type="helix" evidence="21">
    <location>
        <begin position="186"/>
        <end position="197"/>
    </location>
</feature>
<feature type="helix" evidence="21">
    <location>
        <begin position="213"/>
        <end position="216"/>
    </location>
</feature>
<feature type="helix" evidence="21">
    <location>
        <begin position="218"/>
        <end position="247"/>
    </location>
</feature>
<feature type="helix" evidence="21">
    <location>
        <begin position="249"/>
        <end position="256"/>
    </location>
</feature>
<dbReference type="EMBL" id="AF212829">
    <property type="protein sequence ID" value="AAF63708.1"/>
    <property type="molecule type" value="mRNA"/>
</dbReference>
<dbReference type="EMBL" id="AF248241">
    <property type="protein sequence ID" value="AAG31730.1"/>
    <property type="molecule type" value="mRNA"/>
</dbReference>
<dbReference type="EMBL" id="AF257080">
    <property type="protein sequence ID" value="AAG33126.1"/>
    <property type="molecule type" value="mRNA"/>
</dbReference>
<dbReference type="EMBL" id="AY190605">
    <property type="protein sequence ID" value="AAO38739.1"/>
    <property type="molecule type" value="mRNA"/>
</dbReference>
<dbReference type="EMBL" id="AF279809">
    <property type="protein sequence ID" value="AAF85982.1"/>
    <property type="molecule type" value="mRNA"/>
</dbReference>
<dbReference type="EMBL" id="BC075079">
    <property type="protein sequence ID" value="AAH75079.1"/>
    <property type="molecule type" value="mRNA"/>
</dbReference>
<dbReference type="EMBL" id="BC075080">
    <property type="protein sequence ID" value="AAH75080.1"/>
    <property type="molecule type" value="mRNA"/>
</dbReference>
<dbReference type="EMBL" id="BC112063">
    <property type="protein sequence ID" value="AAI12064.1"/>
    <property type="molecule type" value="mRNA"/>
</dbReference>
<dbReference type="EMBL" id="BC112065">
    <property type="protein sequence ID" value="AAI12066.1"/>
    <property type="molecule type" value="mRNA"/>
</dbReference>
<dbReference type="CCDS" id="CCDS6377.1"/>
<dbReference type="RefSeq" id="NP_001269463.1">
    <property type="nucleotide sequence ID" value="NM_001282534.2"/>
</dbReference>
<dbReference type="RefSeq" id="XP_011515404.1">
    <property type="nucleotide sequence ID" value="XM_011517102.2"/>
</dbReference>
<dbReference type="PDB" id="3P1N">
    <property type="method" value="X-ray"/>
    <property type="resolution" value="1.40 A"/>
    <property type="chains" value="P=369-374"/>
</dbReference>
<dbReference type="PDB" id="3P1O">
    <property type="method" value="X-ray"/>
    <property type="resolution" value="1.90 A"/>
    <property type="chains" value="P=369-374"/>
</dbReference>
<dbReference type="PDB" id="3P1P">
    <property type="method" value="X-ray"/>
    <property type="resolution" value="1.95 A"/>
    <property type="chains" value="P=369-374"/>
</dbReference>
<dbReference type="PDB" id="3P1Q">
    <property type="method" value="X-ray"/>
    <property type="resolution" value="1.70 A"/>
    <property type="chains" value="P=369-374"/>
</dbReference>
<dbReference type="PDB" id="3P1R">
    <property type="method" value="X-ray"/>
    <property type="resolution" value="1.70 A"/>
    <property type="chains" value="P=369-374"/>
</dbReference>
<dbReference type="PDB" id="3P1S">
    <property type="method" value="X-ray"/>
    <property type="resolution" value="1.65 A"/>
    <property type="chains" value="P=369-374"/>
</dbReference>
<dbReference type="PDB" id="3SMK">
    <property type="method" value="X-ray"/>
    <property type="resolution" value="2.10 A"/>
    <property type="chains" value="P=369-374"/>
</dbReference>
<dbReference type="PDB" id="3SML">
    <property type="method" value="X-ray"/>
    <property type="resolution" value="1.90 A"/>
    <property type="chains" value="P=370-374"/>
</dbReference>
<dbReference type="PDB" id="3SMM">
    <property type="method" value="X-ray"/>
    <property type="resolution" value="2.00 A"/>
    <property type="chains" value="P=369-374"/>
</dbReference>
<dbReference type="PDB" id="3SMN">
    <property type="method" value="X-ray"/>
    <property type="resolution" value="2.00 A"/>
    <property type="chains" value="P=369-374"/>
</dbReference>
<dbReference type="PDB" id="3SMO">
    <property type="method" value="X-ray"/>
    <property type="resolution" value="1.80 A"/>
    <property type="chains" value="P=369-374"/>
</dbReference>
<dbReference type="PDB" id="3SP5">
    <property type="method" value="X-ray"/>
    <property type="resolution" value="1.80 A"/>
    <property type="chains" value="P=369-374"/>
</dbReference>
<dbReference type="PDB" id="3SPR">
    <property type="method" value="X-ray"/>
    <property type="resolution" value="1.99 A"/>
    <property type="chains" value="P=369-374"/>
</dbReference>
<dbReference type="PDB" id="3UX0">
    <property type="method" value="X-ray"/>
    <property type="resolution" value="1.75 A"/>
    <property type="chains" value="P=369-374"/>
</dbReference>
<dbReference type="PDB" id="4FR3">
    <property type="method" value="X-ray"/>
    <property type="resolution" value="1.90 A"/>
    <property type="chains" value="P=369-374"/>
</dbReference>
<dbReference type="PDB" id="6GHP">
    <property type="method" value="X-ray"/>
    <property type="resolution" value="1.95 A"/>
    <property type="chains" value="P=368-374"/>
</dbReference>
<dbReference type="PDB" id="8K1J">
    <property type="method" value="EM"/>
    <property type="resolution" value="3.00 A"/>
    <property type="chains" value="A/B=1-259"/>
</dbReference>
<dbReference type="PDB" id="8K1Q">
    <property type="method" value="EM"/>
    <property type="resolution" value="3.68 A"/>
    <property type="chains" value="A/B=1-259"/>
</dbReference>
<dbReference type="PDB" id="8K1V">
    <property type="method" value="EM"/>
    <property type="resolution" value="3.48 A"/>
    <property type="chains" value="A/B=1-259"/>
</dbReference>
<dbReference type="PDB" id="8K1Z">
    <property type="method" value="EM"/>
    <property type="resolution" value="3.41 A"/>
    <property type="chains" value="A/B=1-259"/>
</dbReference>
<dbReference type="PDB" id="9G9V">
    <property type="method" value="EM"/>
    <property type="resolution" value="3.32 A"/>
    <property type="chains" value="A/B=1-259"/>
</dbReference>
<dbReference type="PDB" id="9G9W">
    <property type="method" value="EM"/>
    <property type="resolution" value="2.48 A"/>
    <property type="chains" value="A/B=1-265"/>
</dbReference>
<dbReference type="PDBsum" id="3P1N"/>
<dbReference type="PDBsum" id="3P1O"/>
<dbReference type="PDBsum" id="3P1P"/>
<dbReference type="PDBsum" id="3P1Q"/>
<dbReference type="PDBsum" id="3P1R"/>
<dbReference type="PDBsum" id="3P1S"/>
<dbReference type="PDBsum" id="3SMK"/>
<dbReference type="PDBsum" id="3SML"/>
<dbReference type="PDBsum" id="3SMM"/>
<dbReference type="PDBsum" id="3SMN"/>
<dbReference type="PDBsum" id="3SMO"/>
<dbReference type="PDBsum" id="3SP5"/>
<dbReference type="PDBsum" id="3SPR"/>
<dbReference type="PDBsum" id="3UX0"/>
<dbReference type="PDBsum" id="4FR3"/>
<dbReference type="PDBsum" id="6GHP"/>
<dbReference type="PDBsum" id="8K1J"/>
<dbReference type="PDBsum" id="8K1Q"/>
<dbReference type="PDBsum" id="8K1V"/>
<dbReference type="PDBsum" id="8K1Z"/>
<dbReference type="PDBsum" id="9G9V"/>
<dbReference type="PDBsum" id="9G9W"/>
<dbReference type="EMDB" id="EMD-36793"/>
<dbReference type="EMDB" id="EMD-36799"/>
<dbReference type="EMDB" id="EMD-36805"/>
<dbReference type="EMDB" id="EMD-36806"/>
<dbReference type="EMDB" id="EMD-51158"/>
<dbReference type="EMDB" id="EMD-51159"/>
<dbReference type="SMR" id="Q9NPC2"/>
<dbReference type="BioGRID" id="119456">
    <property type="interactions" value="2"/>
</dbReference>
<dbReference type="FunCoup" id="Q9NPC2">
    <property type="interactions" value="560"/>
</dbReference>
<dbReference type="STRING" id="9606.ENSP00000498198"/>
<dbReference type="BindingDB" id="Q9NPC2"/>
<dbReference type="ChEMBL" id="CHEMBL2321614"/>
<dbReference type="DrugBank" id="DB00561">
    <property type="generic name" value="Doxapram"/>
</dbReference>
<dbReference type="DrugBank" id="DB01159">
    <property type="generic name" value="Halothane"/>
</dbReference>
<dbReference type="DrugCentral" id="Q9NPC2"/>
<dbReference type="TCDB" id="1.A.1.9.11">
    <property type="family name" value="the voltage-gated ion channel (vic) superfamily"/>
</dbReference>
<dbReference type="GlyCosmos" id="Q9NPC2">
    <property type="glycosylation" value="1 site, No reported glycans"/>
</dbReference>
<dbReference type="GlyGen" id="Q9NPC2">
    <property type="glycosylation" value="1 site"/>
</dbReference>
<dbReference type="iPTMnet" id="Q9NPC2"/>
<dbReference type="PhosphoSitePlus" id="Q9NPC2"/>
<dbReference type="BioMuta" id="KCNK9"/>
<dbReference type="DMDM" id="13431426"/>
<dbReference type="MassIVE" id="Q9NPC2"/>
<dbReference type="PaxDb" id="9606-ENSP00000430676"/>
<dbReference type="PeptideAtlas" id="Q9NPC2"/>
<dbReference type="Antibodypedia" id="27582">
    <property type="antibodies" value="99 antibodies from 23 providers"/>
</dbReference>
<dbReference type="DNASU" id="51305"/>
<dbReference type="Ensembl" id="ENST00000303015.2">
    <property type="protein sequence ID" value="ENSP00000302166.1"/>
    <property type="gene ID" value="ENSG00000169427.8"/>
</dbReference>
<dbReference type="Ensembl" id="ENST00000520439.3">
    <property type="protein sequence ID" value="ENSP00000430676.1"/>
    <property type="gene ID" value="ENSG00000169427.8"/>
</dbReference>
<dbReference type="Ensembl" id="ENST00000522317.5">
    <property type="protein sequence ID" value="ENSP00000429847.1"/>
    <property type="gene ID" value="ENSG00000169427.8"/>
</dbReference>
<dbReference type="Ensembl" id="ENST00000648164.1">
    <property type="protein sequence ID" value="ENSP00000498198.1"/>
    <property type="gene ID" value="ENSG00000169427.8"/>
</dbReference>
<dbReference type="Ensembl" id="ENST00000650269.1">
    <property type="protein sequence ID" value="ENSP00000496915.1"/>
    <property type="gene ID" value="ENSG00000169427.8"/>
</dbReference>
<dbReference type="GeneID" id="51305"/>
<dbReference type="KEGG" id="hsa:51305"/>
<dbReference type="MANE-Select" id="ENST00000520439.3">
    <property type="protein sequence ID" value="ENSP00000430676.1"/>
    <property type="RefSeq nucleotide sequence ID" value="NM_001282534.2"/>
    <property type="RefSeq protein sequence ID" value="NP_001269463.1"/>
</dbReference>
<dbReference type="UCSC" id="uc003yvg.3">
    <property type="organism name" value="human"/>
</dbReference>
<dbReference type="AGR" id="HGNC:6283"/>
<dbReference type="CTD" id="51305"/>
<dbReference type="DisGeNET" id="51305"/>
<dbReference type="GeneCards" id="KCNK9"/>
<dbReference type="GeneReviews" id="KCNK9"/>
<dbReference type="HGNC" id="HGNC:6283">
    <property type="gene designation" value="KCNK9"/>
</dbReference>
<dbReference type="HPA" id="ENSG00000169427">
    <property type="expression patterns" value="Tissue enriched (brain)"/>
</dbReference>
<dbReference type="MalaCards" id="KCNK9"/>
<dbReference type="MIM" id="605874">
    <property type="type" value="gene"/>
</dbReference>
<dbReference type="MIM" id="612292">
    <property type="type" value="phenotype"/>
</dbReference>
<dbReference type="neXtProt" id="NX_Q9NPC2"/>
<dbReference type="OpenTargets" id="ENSG00000169427"/>
<dbReference type="Orphanet" id="166108">
    <property type="disease" value="Birk-Barel syndrome"/>
</dbReference>
<dbReference type="PharmGKB" id="PA30065"/>
<dbReference type="VEuPathDB" id="HostDB:ENSG00000169427"/>
<dbReference type="eggNOG" id="KOG4404">
    <property type="taxonomic scope" value="Eukaryota"/>
</dbReference>
<dbReference type="GeneTree" id="ENSGT00940000159791"/>
<dbReference type="HOGENOM" id="CLU_022504_4_0_1"/>
<dbReference type="InParanoid" id="Q9NPC2"/>
<dbReference type="OMA" id="LQSDCSC"/>
<dbReference type="OrthoDB" id="297496at2759"/>
<dbReference type="PAN-GO" id="Q9NPC2">
    <property type="GO annotations" value="5 GO annotations based on evolutionary models"/>
</dbReference>
<dbReference type="PhylomeDB" id="Q9NPC2"/>
<dbReference type="TreeFam" id="TF313947"/>
<dbReference type="PathwayCommons" id="Q9NPC2"/>
<dbReference type="Reactome" id="R-HSA-1299316">
    <property type="pathway name" value="TWIK-releated acid-sensitive K+ channel (TASK)"/>
</dbReference>
<dbReference type="Reactome" id="R-HSA-5576886">
    <property type="pathway name" value="Phase 4 - resting membrane potential"/>
</dbReference>
<dbReference type="SignaLink" id="Q9NPC2"/>
<dbReference type="SIGNOR" id="Q9NPC2"/>
<dbReference type="BioGRID-ORCS" id="51305">
    <property type="hits" value="13 hits in 1151 CRISPR screens"/>
</dbReference>
<dbReference type="EvolutionaryTrace" id="Q9NPC2"/>
<dbReference type="GeneWiki" id="KCNK9"/>
<dbReference type="GenomeRNAi" id="51305"/>
<dbReference type="Pharos" id="Q9NPC2">
    <property type="development level" value="Tclin"/>
</dbReference>
<dbReference type="PRO" id="PR:Q9NPC2"/>
<dbReference type="Proteomes" id="UP000005640">
    <property type="component" value="Chromosome 8"/>
</dbReference>
<dbReference type="RNAct" id="Q9NPC2">
    <property type="molecule type" value="protein"/>
</dbReference>
<dbReference type="Bgee" id="ENSG00000169427">
    <property type="expression patterns" value="Expressed in cerebellar hemisphere and 111 other cell types or tissues"/>
</dbReference>
<dbReference type="ExpressionAtlas" id="Q9NPC2">
    <property type="expression patterns" value="baseline and differential"/>
</dbReference>
<dbReference type="GO" id="GO:0030425">
    <property type="term" value="C:dendrite"/>
    <property type="evidence" value="ECO:0007669"/>
    <property type="project" value="UniProtKB-SubCell"/>
</dbReference>
<dbReference type="GO" id="GO:0005743">
    <property type="term" value="C:mitochondrial inner membrane"/>
    <property type="evidence" value="ECO:0000250"/>
    <property type="project" value="UniProtKB"/>
</dbReference>
<dbReference type="GO" id="GO:0005886">
    <property type="term" value="C:plasma membrane"/>
    <property type="evidence" value="ECO:0000314"/>
    <property type="project" value="UniProtKB"/>
</dbReference>
<dbReference type="GO" id="GO:0008021">
    <property type="term" value="C:synaptic vesicle"/>
    <property type="evidence" value="ECO:0007669"/>
    <property type="project" value="Ensembl"/>
</dbReference>
<dbReference type="GO" id="GO:0042802">
    <property type="term" value="F:identical protein binding"/>
    <property type="evidence" value="ECO:0000314"/>
    <property type="project" value="UniProtKB"/>
</dbReference>
<dbReference type="GO" id="GO:0046872">
    <property type="term" value="F:metal ion binding"/>
    <property type="evidence" value="ECO:0007669"/>
    <property type="project" value="UniProtKB-KW"/>
</dbReference>
<dbReference type="GO" id="GO:0015271">
    <property type="term" value="F:outward rectifier potassium channel activity"/>
    <property type="evidence" value="ECO:0000314"/>
    <property type="project" value="UniProtKB"/>
</dbReference>
<dbReference type="GO" id="GO:0005267">
    <property type="term" value="F:potassium channel activity"/>
    <property type="evidence" value="ECO:0000314"/>
    <property type="project" value="MGI"/>
</dbReference>
<dbReference type="GO" id="GO:0022841">
    <property type="term" value="F:potassium ion leak channel activity"/>
    <property type="evidence" value="ECO:0000318"/>
    <property type="project" value="GO_Central"/>
</dbReference>
<dbReference type="GO" id="GO:0046982">
    <property type="term" value="F:protein heterodimerization activity"/>
    <property type="evidence" value="ECO:0000314"/>
    <property type="project" value="UniProtKB"/>
</dbReference>
<dbReference type="GO" id="GO:0005272">
    <property type="term" value="F:sodium channel activity"/>
    <property type="evidence" value="ECO:0000314"/>
    <property type="project" value="UniProtKB"/>
</dbReference>
<dbReference type="GO" id="GO:0071468">
    <property type="term" value="P:cellular response to acidic pH"/>
    <property type="evidence" value="ECO:0000314"/>
    <property type="project" value="UniProtKB"/>
</dbReference>
<dbReference type="GO" id="GO:2000859">
    <property type="term" value="P:negative regulation of aldosterone secretion"/>
    <property type="evidence" value="ECO:0000250"/>
    <property type="project" value="UniProtKB"/>
</dbReference>
<dbReference type="GO" id="GO:1990573">
    <property type="term" value="P:potassium ion import across plasma membrane"/>
    <property type="evidence" value="ECO:0000314"/>
    <property type="project" value="MGI"/>
</dbReference>
<dbReference type="GO" id="GO:0006813">
    <property type="term" value="P:potassium ion transport"/>
    <property type="evidence" value="ECO:0000303"/>
    <property type="project" value="UniProtKB"/>
</dbReference>
<dbReference type="GO" id="GO:0099605">
    <property type="term" value="P:regulation of action potential firing rate"/>
    <property type="evidence" value="ECO:0000250"/>
    <property type="project" value="UniProtKB"/>
</dbReference>
<dbReference type="GO" id="GO:0060075">
    <property type="term" value="P:regulation of resting membrane potential"/>
    <property type="evidence" value="ECO:0000250"/>
    <property type="project" value="UniProtKB"/>
</dbReference>
<dbReference type="GO" id="GO:0007601">
    <property type="term" value="P:visual perception"/>
    <property type="evidence" value="ECO:0000250"/>
    <property type="project" value="UniProtKB"/>
</dbReference>
<dbReference type="FunFam" id="1.10.287.70:FF:000057">
    <property type="entry name" value="Potassium channel subfamily K member"/>
    <property type="match status" value="1"/>
</dbReference>
<dbReference type="Gene3D" id="1.10.287.70">
    <property type="match status" value="1"/>
</dbReference>
<dbReference type="InterPro" id="IPR003280">
    <property type="entry name" value="2pore_dom_K_chnl"/>
</dbReference>
<dbReference type="InterPro" id="IPR003092">
    <property type="entry name" value="2pore_dom_K_chnl_TASK"/>
</dbReference>
<dbReference type="InterPro" id="IPR013099">
    <property type="entry name" value="K_chnl_dom"/>
</dbReference>
<dbReference type="InterPro" id="IPR005407">
    <property type="entry name" value="KCNK9"/>
</dbReference>
<dbReference type="PANTHER" id="PTHR11003:SF75">
    <property type="entry name" value="POTASSIUM CHANNEL SUBFAMILY K MEMBER 9"/>
    <property type="match status" value="1"/>
</dbReference>
<dbReference type="PANTHER" id="PTHR11003">
    <property type="entry name" value="POTASSIUM CHANNEL, SUBFAMILY K"/>
    <property type="match status" value="1"/>
</dbReference>
<dbReference type="Pfam" id="PF07885">
    <property type="entry name" value="Ion_trans_2"/>
    <property type="match status" value="2"/>
</dbReference>
<dbReference type="PIRSF" id="PIRSF038061">
    <property type="entry name" value="K_channel_subfamily_K_type"/>
    <property type="match status" value="1"/>
</dbReference>
<dbReference type="PRINTS" id="PR01333">
    <property type="entry name" value="2POREKCHANEL"/>
</dbReference>
<dbReference type="PRINTS" id="PR01585">
    <property type="entry name" value="TASK3CHANNEL"/>
</dbReference>
<dbReference type="PRINTS" id="PR01095">
    <property type="entry name" value="TASKCHANNEL"/>
</dbReference>
<dbReference type="SUPFAM" id="SSF81324">
    <property type="entry name" value="Voltage-gated potassium channels"/>
    <property type="match status" value="2"/>
</dbReference>
<accession>Q9NPC2</accession>
<accession>Q2M290</accession>
<accession>Q540F2</accession>
<gene>
    <name evidence="15 19" type="primary">KCNK9</name>
    <name evidence="16" type="synonym">TASK3</name>
</gene>
<reference key="1">
    <citation type="journal article" date="2000" name="J. Biol. Chem.">
        <title>TASK-3, a novel tandem pore domain acid-sensitive K+ channel. An extracellular histidine as pH sensor.</title>
        <authorList>
            <person name="Rajan S."/>
            <person name="Wischmeyer E."/>
            <person name="Liu G.X."/>
            <person name="Preisig-Mueller R."/>
            <person name="Daut J."/>
            <person name="Karschin A."/>
            <person name="Derst C."/>
        </authorList>
    </citation>
    <scope>NUCLEOTIDE SEQUENCE [MRNA]</scope>
</reference>
<reference key="2">
    <citation type="journal article" date="2000" name="Brain Res. Mol. Brain Res.">
        <title>Cloning, localisation and functional expression of a novel human, cerebellum specific, two pore domain potassium channel.</title>
        <authorList>
            <person name="Chapman C.G."/>
            <person name="Meadows H.J."/>
            <person name="Godden R.J."/>
            <person name="Campbell D.A."/>
            <person name="Duckworth M."/>
            <person name="Kelsell R.E."/>
            <person name="Murdock P.R."/>
            <person name="Randall A.D."/>
            <person name="Rennie G.I."/>
            <person name="Gloger I.S."/>
        </authorList>
    </citation>
    <scope>NUCLEOTIDE SEQUENCE [MRNA]</scope>
    <scope>FUNCTION</scope>
    <scope>TRANSPORTER ACTIVITY</scope>
    <scope>ACTIVITY REGULATION</scope>
    <scope>TISSUE SPECIFICITY</scope>
    <source>
        <tissue>Cerebellum</tissue>
    </source>
</reference>
<reference key="3">
    <citation type="journal article" date="2001" name="J. Neurophysiol.">
        <title>KT3.2 and KT3.3, two novel human two-pore K(+) channels closely related to TASK-1.</title>
        <authorList>
            <person name="Vega-Saenz de Miera E."/>
            <person name="Lau D.H.P."/>
            <person name="Zhadina M."/>
            <person name="Pountney D."/>
            <person name="Coetzee W.A."/>
            <person name="Rudy B."/>
        </authorList>
    </citation>
    <scope>NUCLEOTIDE SEQUENCE [MRNA]</scope>
    <scope>FUNCTION</scope>
    <scope>TRANSPORTER ACTIVITY</scope>
    <scope>ACTIVITY REGULATION</scope>
    <scope>TISSUE SPECIFICITY</scope>
</reference>
<reference key="4">
    <citation type="journal article" date="2003" name="Cancer Cell">
        <title>Genomic amplification and oncogenic properties of the KCNK9 potassium channel gene.</title>
        <authorList>
            <person name="Mu D."/>
            <person name="Chen L."/>
            <person name="Zhang X."/>
            <person name="See L.-H."/>
            <person name="Koch C.M."/>
            <person name="Yen C."/>
            <person name="Tong J.J."/>
            <person name="Spiegel L."/>
            <person name="Nguyen K.C.Q."/>
            <person name="Servoss A."/>
            <person name="Peng Y."/>
            <person name="Pei L."/>
            <person name="Marks J.R."/>
            <person name="Lowe S."/>
            <person name="Hoey T."/>
            <person name="Jan L.Y."/>
            <person name="McCombie W.R."/>
            <person name="Wigler M.H."/>
            <person name="Powers S."/>
        </authorList>
    </citation>
    <scope>NUCLEOTIDE SEQUENCE [MRNA]</scope>
    <scope>OVEREXPRESSION IN BREAST CANCERS</scope>
</reference>
<reference key="5">
    <citation type="submission" date="2000-06" db="EMBL/GenBank/DDBJ databases">
        <title>Human Task-3, a novel 2P domain potassium channel related to Task.</title>
        <authorList>
            <person name="Girard C."/>
            <person name="Lesage F."/>
            <person name="Tinel N."/>
            <person name="Lazdunski M."/>
        </authorList>
    </citation>
    <scope>NUCLEOTIDE SEQUENCE [MRNA]</scope>
</reference>
<reference key="6">
    <citation type="journal article" date="2004" name="Genome Res.">
        <title>The status, quality, and expansion of the NIH full-length cDNA project: the Mammalian Gene Collection (MGC).</title>
        <authorList>
            <consortium name="The MGC Project Team"/>
        </authorList>
    </citation>
    <scope>NUCLEOTIDE SEQUENCE [LARGE SCALE MRNA]</scope>
    <source>
        <tissue>Brain</tissue>
    </source>
</reference>
<reference key="7">
    <citation type="journal article" date="2012" name="J. Biol. Chem.">
        <title>Acid-sensitive TWIK and TASK two-pore domain potassium channels change ion selectivity and become permeable to sodium in extracellular acidification.</title>
        <authorList>
            <person name="Ma L."/>
            <person name="Zhang X."/>
            <person name="Zhou M."/>
            <person name="Chen H."/>
        </authorList>
    </citation>
    <scope>FUNCTION</scope>
    <scope>TRANSPORTER ACTIVITY</scope>
    <scope>MUTAGENESIS OF HIS-98</scope>
</reference>
<reference key="8">
    <citation type="journal article" date="2012" name="Sci. Signal.">
        <title>SUMOylation silences heterodimeric TASK potassium channels containing K2P1 subunits in cerebellar granule neurons.</title>
        <authorList>
            <person name="Plant L.D."/>
            <person name="Zuniga L."/>
            <person name="Araki D."/>
            <person name="Marks J.D."/>
            <person name="Goldstein S.A."/>
        </authorList>
    </citation>
    <scope>INTERACTION WITH KCNK1</scope>
    <scope>FUNCTION</scope>
    <scope>SUBCELLULAR LOCATION</scope>
</reference>
<reference key="9">
    <citation type="journal article" date="2016" name="Cell">
        <title>A Non-canonical Voltage-Sensing Mechanism Controls Gating in K2P K(+) Channels.</title>
        <authorList>
            <person name="Schewe M."/>
            <person name="Nematian-Ardestani E."/>
            <person name="Sun H."/>
            <person name="Musinszki M."/>
            <person name="Cordeiro S."/>
            <person name="Bucci G."/>
            <person name="de Groot B.L."/>
            <person name="Tucker S.J."/>
            <person name="Rapedius M."/>
            <person name="Baukrowitz T."/>
        </authorList>
    </citation>
    <scope>FUNCTION</scope>
    <scope>TRANSPORTER ACTIVITY</scope>
    <scope>REACTION MECHANISM</scope>
    <scope>DOMAIN</scope>
    <scope>MUTAGENESIS OF THR-93 AND THR-199</scope>
</reference>
<reference key="10">
    <citation type="journal article" date="2024" name="Proc. Natl. Acad. Sci. U.S.A.">
        <title>C-type inactivation and proton modulation mechanisms of the TASK3 channel.</title>
        <authorList>
            <person name="Lin H."/>
            <person name="Li J."/>
            <person name="Zhang Q."/>
            <person name="Yang H."/>
            <person name="Chen S."/>
        </authorList>
    </citation>
    <scope>STRUCTURE BY ELECTRON MICROSCOPY (3.00 ANGSTROMS) OF 1-259 IN COMPLEX WITH POTASSIUM IONS</scope>
    <scope>SUBUNIT</scope>
    <scope>DOMAIN</scope>
    <scope>SITE</scope>
    <scope>FUNCTION</scope>
    <scope>TRANSPORTER ACTIVITY</scope>
    <scope>MUTAGENESIS OF TRP-78 AND HIS-98</scope>
</reference>
<reference key="11">
    <citation type="journal article" date="2008" name="Am. J. Hum. Genet.">
        <title>Maternally inherited Birk Barel mental retardation dysmorphism syndrome caused by a mutation in the genomically imprinted potassium channel KCNK9.</title>
        <authorList>
            <person name="Barel O."/>
            <person name="Shalev S.A."/>
            <person name="Ofir R."/>
            <person name="Cohen A."/>
            <person name="Zlotogora J."/>
            <person name="Shorer Z."/>
            <person name="Mazor G."/>
            <person name="Finer G."/>
            <person name="Khateeb S."/>
            <person name="Zilberberg N."/>
            <person name="Birk O.S."/>
        </authorList>
    </citation>
    <scope>VARIANT BIBARS ARG-236</scope>
    <scope>CHARACTERIZATION OF VARIANT BIBARS ARG-236</scope>
</reference>
<reference key="12">
    <citation type="journal article" date="2016" name="Am. J. Med. Genet. A">
        <title>KCNK9 imprinting syndrome-further delineation of a possible treatable disorder.</title>
        <authorList>
            <person name="Graham J.M. Jr."/>
            <person name="Zadeh N."/>
            <person name="Kelley M."/>
            <person name="Tan E.S."/>
            <person name="Liew W."/>
            <person name="Tan V."/>
            <person name="Deardorff M.A."/>
            <person name="Wilson G.N."/>
            <person name="Sagi-Dain L."/>
            <person name="Shalev S.A."/>
        </authorList>
    </citation>
    <scope>VARIANT BIBARS ARG-236</scope>
</reference>
<reference key="13">
    <citation type="journal article" date="2020" name="Eur. J. Med. Genet.">
        <title>Novel variant in the KCNK9 gene in a girl with Birk Barel syndrome.</title>
        <authorList>
            <person name="Sediva M."/>
            <person name="Lassuthova P."/>
            <person name="Zamecnik J."/>
            <person name="Sedlackova L."/>
            <person name="Seeman P."/>
            <person name="Haberlova J."/>
        </authorList>
    </citation>
    <scope>VARIANT BIBARS ASP-237</scope>
</reference>
<comment type="function">
    <text evidence="2 3 5 6 9 10 11 14">K(+) channel that conducts voltage-dependent outward rectifying currents upon membrane depolarization. Voltage sensing is coupled to K(+) electrochemical gradient in an 'ion flux gating' mode where outward but not inward ion flow opens the gate (PubMed:11042359, PubMed:11431495, PubMed:26919430, PubMed:38630723). Changes ion selectivity and becomes permeable to Na(+) ions in response to extracellular acidification. Protonation of the pH sensor His-98 stabilizes C-type inactivation conformation likely converting the channel from outward K(+)-conducting, to inward Na(+)-conducting to nonconductive state (PubMed:22948150, PubMed:38630723). Homo- and heterodimerizes to form functional channels with distinct regulatory and gating properties (By similarity) (PubMed:23169818, PubMed:38630723). Allows K(+) currents with fast-gating kinetics important for the repolarization and hyperpolarization phases of action potentials (By similarity). In granule neurons, hyperpolarizes the resting membrane potential to limit intrinsic neuronal excitability, but once the action potential threshold is reached, supports high-frequency action potential firing and increased neuronal excitability. Homomeric and/or heteromeric KCNK3:KCNK9 channels operate in cerebellar granule cells, whereas heteromeric KCNK1:KCNK9 enables currents in hippocampal dentate gyrus granule neurons (By similarity). Dispensable for central chemosensory respiration i.e. breathing controlled by brainstem CO2/pH, it rather conducts pH-sensitive currents and controls the firing rate of serotonergic raphe neurons involved in potentiation of the respiratory chemoreflex (By similarity). In retinal ganglion cells, mediates outward currents that regulate action potentials in response to acidification of the synaptic cleft. Involved in transmission of image-forming and nonimage-forming visual information in the retina (By similarity). In adrenal gland, contributes to the maintenance of a hyperpolarized resting membrane potential of aldosterone-producing cells at zona glomerulosa and limits aldosterone release as part of a regulatory mechanism that controls arterial blood pressure and electrolyte homeostasis (By similarity).</text>
</comment>
<comment type="catalytic activity">
    <reaction evidence="5 6 11 14">
        <text>K(+)(in) = K(+)(out)</text>
        <dbReference type="Rhea" id="RHEA:29463"/>
        <dbReference type="ChEBI" id="CHEBI:29103"/>
    </reaction>
</comment>
<comment type="catalytic activity">
    <reaction evidence="9">
        <text>Na(+)(in) = Na(+)(out)</text>
        <dbReference type="Rhea" id="RHEA:34963"/>
        <dbReference type="ChEBI" id="CHEBI:29101"/>
    </reaction>
</comment>
<comment type="activity regulation">
    <text evidence="5 6">Inhibited by extracellular acidification adopting a nonconductive conformation at pH 6.0. Inhibited by phorbol 12-myristate 13-acetate (PMA).</text>
</comment>
<comment type="subunit">
    <text evidence="3 10 14">Homodimer (PubMed:38630723). Heterodimer with KCNK1 (PubMed:23169818). Heterodimer with KCNK3 (By similarity).</text>
</comment>
<comment type="subcellular location">
    <subcellularLocation>
        <location evidence="10">Cell membrane</location>
        <topology evidence="4">Multi-pass membrane protein</topology>
    </subcellularLocation>
    <subcellularLocation>
        <location evidence="2">Mitochondrion inner membrane</location>
        <topology evidence="4">Multi-pass membrane protein</topology>
    </subcellularLocation>
    <subcellularLocation>
        <location evidence="2">Cell projection</location>
        <location evidence="2">Dendrite</location>
    </subcellularLocation>
    <text evidence="2">Colocalizes with MAP2 in the soma and proximal dendrites of dentate gyrus granule cells.</text>
</comment>
<comment type="tissue specificity">
    <text evidence="5 6">Mainly found in the cerebellum. Also found in adrenal gland, kidney and lung.</text>
</comment>
<comment type="domain">
    <text evidence="11 14">Each subunit contributes two pore-forming domains 1 and 2 which assemble to form a single pore with M2 and M4 transmembrane helices lining the central cavity and M1 and M3 facing the lipid bilayer. The transmembrane helices are bridged by the selectivity filters 1 and 2 carrying a signature sequence TxTTxG(Y/F)G(D/H) that coordinate the permeant ions. Up to four ions can simultaneously occupy the selectivity filter and at least two elementary charges must translocate across the filter to convert it into the open conformation.</text>
</comment>
<comment type="domain">
    <text evidence="14">The X-gate is positioned at the distal ends of M4 transmembrane helices forming a two-turn-helical structure with the methyl group of Thr-248 closing the ion conduction pathway.</text>
</comment>
<comment type="disease" evidence="8 12 13">
    <disease id="DI-02513">
        <name>Birk-Barel syndrome</name>
        <acronym>BIBARS</acronym>
        <description>A syndrome characterized by intellectual disability, hypotonia, hyperactivity, and facial dysmorphism. BIBARS transmission pattern is consistent with autosomal dominant inheritance with paternal imprinting.</description>
        <dbReference type="MIM" id="612292"/>
    </disease>
    <text>The disease is caused by variants affecting the gene represented in this entry.</text>
</comment>
<comment type="miscellaneous">
    <text evidence="7">Overexpressed in a high proportion of breast cancers. May confer resistance to growth factor deprivation and hypoxia, thereby promoting tumor cell survival in poorly oxygenated areas of solid tumors.</text>
</comment>
<comment type="similarity">
    <text evidence="17">Belongs to the two pore domain potassium channel (TC 1.A.1.8) family.</text>
</comment>
<name>KCNK9_HUMAN</name>
<evidence type="ECO:0000250" key="1">
    <source>
        <dbReference type="UniProtKB" id="P57789"/>
    </source>
</evidence>
<evidence type="ECO:0000250" key="2">
    <source>
        <dbReference type="UniProtKB" id="Q3LS21"/>
    </source>
</evidence>
<evidence type="ECO:0000250" key="3">
    <source>
        <dbReference type="UniProtKB" id="Q9ES08"/>
    </source>
</evidence>
<evidence type="ECO:0000255" key="4"/>
<evidence type="ECO:0000269" key="5">
    <source>
    </source>
</evidence>
<evidence type="ECO:0000269" key="6">
    <source>
    </source>
</evidence>
<evidence type="ECO:0000269" key="7">
    <source>
    </source>
</evidence>
<evidence type="ECO:0000269" key="8">
    <source>
    </source>
</evidence>
<evidence type="ECO:0000269" key="9">
    <source>
    </source>
</evidence>
<evidence type="ECO:0000269" key="10">
    <source>
    </source>
</evidence>
<evidence type="ECO:0000269" key="11">
    <source>
    </source>
</evidence>
<evidence type="ECO:0000269" key="12">
    <source>
    </source>
</evidence>
<evidence type="ECO:0000269" key="13">
    <source>
    </source>
</evidence>
<evidence type="ECO:0000269" key="14">
    <source>
    </source>
</evidence>
<evidence type="ECO:0000303" key="15">
    <source>
    </source>
</evidence>
<evidence type="ECO:0000303" key="16">
    <source>
    </source>
</evidence>
<evidence type="ECO:0000305" key="17"/>
<evidence type="ECO:0000305" key="18">
    <source>
    </source>
</evidence>
<evidence type="ECO:0000312" key="19">
    <source>
        <dbReference type="HGNC" id="HGNC:6283"/>
    </source>
</evidence>
<evidence type="ECO:0000312" key="20">
    <source>
        <dbReference type="PDB" id="8K1J"/>
    </source>
</evidence>
<evidence type="ECO:0007829" key="21">
    <source>
        <dbReference type="PDB" id="9G9W"/>
    </source>
</evidence>
<organism>
    <name type="scientific">Homo sapiens</name>
    <name type="common">Human</name>
    <dbReference type="NCBI Taxonomy" id="9606"/>
    <lineage>
        <taxon>Eukaryota</taxon>
        <taxon>Metazoa</taxon>
        <taxon>Chordata</taxon>
        <taxon>Craniata</taxon>
        <taxon>Vertebrata</taxon>
        <taxon>Euteleostomi</taxon>
        <taxon>Mammalia</taxon>
        <taxon>Eutheria</taxon>
        <taxon>Euarchontoglires</taxon>
        <taxon>Primates</taxon>
        <taxon>Haplorrhini</taxon>
        <taxon>Catarrhini</taxon>
        <taxon>Hominidae</taxon>
        <taxon>Homo</taxon>
    </lineage>
</organism>
<sequence length="374" mass="42264">MKRQNVRTLSLIVCTFTYLLVGAAVFDALESDHEMREEEKLKAEEIRIKGKYNISSEDYRQLELVILQSEPHRAGVQWKFAGSFYFAITVITTIGYGHAAPGTDAGKAFCMFYAVLGIPLTLVMFQSLGERMNTFVRYLLKRIKKCCGMRNTDVSMENMVTVGFFSCMGTLCIGAAAFSQCEEWSFFHAYYYCFITLTTIGFGDYVALQTKGALQKKPLYVAFSFMYILVGLTVIGAFLNLVVLRFLTMNSEDERRDAEERASLAGNRNSMVIHIPEEPRPSRPRYKADVPDLQSVCSCTCYRSQDYGGRSVAPQNSFSAKLAPHYFHSISYKIEEISPSTLKNSLFPSPISSISPGLHSFTDHQRLMKRRKSV</sequence>
<protein>
    <recommendedName>
        <fullName>Potassium channel subfamily K member 9</fullName>
    </recommendedName>
    <alternativeName>
        <fullName>Acid-sensitive potassium channel protein TASK-3</fullName>
    </alternativeName>
    <alternativeName>
        <fullName>TWIK-related acid-sensitive K(+) channel 3</fullName>
    </alternativeName>
    <alternativeName>
        <fullName>Two pore potassium channel KT3.2</fullName>
        <shortName>Two pore K(+) channel KT3.2</shortName>
    </alternativeName>
</protein>